<protein>
    <recommendedName>
        <fullName>WD repeat-containing protein 48 homolog</fullName>
    </recommendedName>
</protein>
<accession>B4P7H8</accession>
<name>WDR48_DROYA</name>
<comment type="function">
    <text evidence="1 2 3">Regulatory component of the Usp12-46 deubiquitylase complex (By similarity). activates deubiquitination by increasing the catalytic turnover without increasing the affinity of deubiquitinating enzymes for the substrate (By similarity). The complex deubiquitylates the wg/wingless-signaling receptor arr/arrow, which stabilizes the receptor and increases its concentration at the cell surface; this enhances the sensitivity of cells to wg/wingless-signal stimulation. This increases the amplitude and spatial range of the signaling response to the wg/wingless morphogen gradient, facilitating the precise concentration-dependent regulation of its target genes. Together with Wdr20 and Usp12-46 required for wg/wingless-mediated signaling in the wing imaginal disc and for wg/wingless-dependent regulation of intestinal stem cell proliferation (By similarity).</text>
</comment>
<comment type="subunit">
    <text evidence="2">Catalytic component of the Usp12-46 deubiquitylase complex consisting of Usp12-46, Wdr20 and Uaf1; regulatory subunit that, together wtih Wdr20, stabilizes Usp12-46. The Usp12-46 deubiquitylase complex associates with arr/arrow; the interaction leads to deubiquitination and stabilization of arr/arrow.</text>
</comment>
<comment type="similarity">
    <text evidence="6">Belongs to the WD repeat WDR48 family.</text>
</comment>
<sequence length="680" mass="76594">MLTHKTCQARKKMQVSFVIRDAEEKQHRNGVNALQLDANNGKLYSAGRDAIIRVWNTRTDSSEKYIQSMEHHNDWVNDIVLCCNGRNLISASCDTTVKVWNAQKGFCMSTLRTHRDYVQALAYAKDREQVASAGLDKAIFLWDVNTLTALTASNNTVTTSSLTGSKDSIYSLAMNPSGTVIVSGSTENILRIWDPRTCMRSMKLRGHTENVRCLVVSPDGNQVVSGSSDGTIKVWNLGQQRCVQTIHVHKEGVWSLLMSENFQYIVSGSRDRNIIVTEMRNPSNKTLVCEEQAPVLSLGYNIDKTGVWATTWNSDIRCWKLPMYDRCTMNSSGGMDAQWTQGGTEVACIKGGAAIKECAVLNDKRYIITKDSQDQVVVYDVLRVVKKEQLGAVDYEAEVKKRNKQVYIPNWFTVDLKTGMPTIVLGQEEVDCFSAWVSIEAGLPECVDPTTEIKINYGKLLLEALLEYWTPPHSIPPNEMEPDMHGNGYFQVPKHTPVIFSEVGGRTVCRLLVRDAAGDSESTLLHETAPQWVTDVVIEKNIPKFLKIPFFLQPHPQMTKPERTKKDRLVANEFIQCRKVCEHVLEKVLNAETTPSGGNANNSLQNSQSDANSEGSQLPAEERIELWCNDVVVDPNMDLRTVRHFIWKQSTDLTFQYKTKQNFNYDGSIGDSLERVTRKY</sequence>
<proteinExistence type="inferred from homology"/>
<organism evidence="7">
    <name type="scientific">Drosophila yakuba</name>
    <name type="common">Fruit fly</name>
    <dbReference type="NCBI Taxonomy" id="7245"/>
    <lineage>
        <taxon>Eukaryota</taxon>
        <taxon>Metazoa</taxon>
        <taxon>Ecdysozoa</taxon>
        <taxon>Arthropoda</taxon>
        <taxon>Hexapoda</taxon>
        <taxon>Insecta</taxon>
        <taxon>Pterygota</taxon>
        <taxon>Neoptera</taxon>
        <taxon>Endopterygota</taxon>
        <taxon>Diptera</taxon>
        <taxon>Brachycera</taxon>
        <taxon>Muscomorpha</taxon>
        <taxon>Ephydroidea</taxon>
        <taxon>Drosophilidae</taxon>
        <taxon>Drosophila</taxon>
        <taxon>Sophophora</taxon>
    </lineage>
</organism>
<dbReference type="EMBL" id="CM000158">
    <property type="protein sequence ID" value="EDW90013.1"/>
    <property type="molecule type" value="Genomic_DNA"/>
</dbReference>
<dbReference type="SMR" id="B4P7H8"/>
<dbReference type="EnsemblMetazoa" id="FBtr0259552">
    <property type="protein sequence ID" value="FBpp0258044"/>
    <property type="gene ID" value="FBgn0230740"/>
</dbReference>
<dbReference type="EnsemblMetazoa" id="XM_002090265.3">
    <property type="protein sequence ID" value="XP_002090301.1"/>
    <property type="gene ID" value="LOC6529296"/>
</dbReference>
<dbReference type="GeneID" id="6529296"/>
<dbReference type="KEGG" id="dya:Dyak_GE13034"/>
<dbReference type="eggNOG" id="KOG0308">
    <property type="taxonomic scope" value="Eukaryota"/>
</dbReference>
<dbReference type="HOGENOM" id="CLU_014960_0_1_1"/>
<dbReference type="OMA" id="IRHYHIL"/>
<dbReference type="OrthoDB" id="2421129at2759"/>
<dbReference type="PhylomeDB" id="B4P7H8"/>
<dbReference type="Proteomes" id="UP000002282">
    <property type="component" value="Chromosome 2R"/>
</dbReference>
<dbReference type="GO" id="GO:0043130">
    <property type="term" value="F:ubiquitin binding"/>
    <property type="evidence" value="ECO:0007669"/>
    <property type="project" value="TreeGrafter"/>
</dbReference>
<dbReference type="GO" id="GO:0000724">
    <property type="term" value="P:double-strand break repair via homologous recombination"/>
    <property type="evidence" value="ECO:0007669"/>
    <property type="project" value="TreeGrafter"/>
</dbReference>
<dbReference type="CDD" id="cd17041">
    <property type="entry name" value="Ubl_WDR48"/>
    <property type="match status" value="1"/>
</dbReference>
<dbReference type="CDD" id="cd00200">
    <property type="entry name" value="WD40"/>
    <property type="match status" value="1"/>
</dbReference>
<dbReference type="FunFam" id="2.130.10.10:FF:000543">
    <property type="entry name" value="WD repeat-containing protein 48 homolog"/>
    <property type="match status" value="1"/>
</dbReference>
<dbReference type="FunFam" id="2.130.10.10:FF:000984">
    <property type="entry name" value="WD repeat-containing protein 48 homolog"/>
    <property type="match status" value="1"/>
</dbReference>
<dbReference type="Gene3D" id="2.130.10.10">
    <property type="entry name" value="YVTN repeat-like/Quinoprotein amine dehydrogenase"/>
    <property type="match status" value="2"/>
</dbReference>
<dbReference type="InterPro" id="IPR020472">
    <property type="entry name" value="G-protein_beta_WD-40_rep"/>
</dbReference>
<dbReference type="InterPro" id="IPR015943">
    <property type="entry name" value="WD40/YVTN_repeat-like_dom_sf"/>
</dbReference>
<dbReference type="InterPro" id="IPR019775">
    <property type="entry name" value="WD40_repeat_CS"/>
</dbReference>
<dbReference type="InterPro" id="IPR036322">
    <property type="entry name" value="WD40_repeat_dom_sf"/>
</dbReference>
<dbReference type="InterPro" id="IPR001680">
    <property type="entry name" value="WD40_rpt"/>
</dbReference>
<dbReference type="InterPro" id="IPR051246">
    <property type="entry name" value="WDR48"/>
</dbReference>
<dbReference type="InterPro" id="IPR021772">
    <property type="entry name" value="WDR48/Bun107"/>
</dbReference>
<dbReference type="PANTHER" id="PTHR19862">
    <property type="entry name" value="WD REPEAT-CONTAINING PROTEIN 48"/>
    <property type="match status" value="1"/>
</dbReference>
<dbReference type="PANTHER" id="PTHR19862:SF14">
    <property type="entry name" value="WD REPEAT-CONTAINING PROTEIN 48"/>
    <property type="match status" value="1"/>
</dbReference>
<dbReference type="Pfam" id="PF11816">
    <property type="entry name" value="DUF3337"/>
    <property type="match status" value="1"/>
</dbReference>
<dbReference type="Pfam" id="PF00400">
    <property type="entry name" value="WD40"/>
    <property type="match status" value="6"/>
</dbReference>
<dbReference type="PRINTS" id="PR00320">
    <property type="entry name" value="GPROTEINBRPT"/>
</dbReference>
<dbReference type="SMART" id="SM00320">
    <property type="entry name" value="WD40"/>
    <property type="match status" value="8"/>
</dbReference>
<dbReference type="SUPFAM" id="SSF50978">
    <property type="entry name" value="WD40 repeat-like"/>
    <property type="match status" value="1"/>
</dbReference>
<dbReference type="PROSITE" id="PS00678">
    <property type="entry name" value="WD_REPEATS_1"/>
    <property type="match status" value="4"/>
</dbReference>
<dbReference type="PROSITE" id="PS50082">
    <property type="entry name" value="WD_REPEATS_2"/>
    <property type="match status" value="5"/>
</dbReference>
<dbReference type="PROSITE" id="PS50294">
    <property type="entry name" value="WD_REPEATS_REGION"/>
    <property type="match status" value="5"/>
</dbReference>
<reference key="1">
    <citation type="journal article" date="2007" name="Nature">
        <title>Evolution of genes and genomes on the Drosophila phylogeny.</title>
        <authorList>
            <consortium name="Drosophila 12 genomes consortium"/>
        </authorList>
    </citation>
    <scope>NUCLEOTIDE SEQUENCE [LARGE SCALE GENOMIC DNA]</scope>
    <source>
        <strain>Tai18E2 / Tucson 14021-0261.01</strain>
    </source>
</reference>
<gene>
    <name evidence="2" type="primary">Uaf1</name>
    <name type="ORF">GE13034</name>
</gene>
<evidence type="ECO:0000250" key="1"/>
<evidence type="ECO:0000250" key="2">
    <source>
        <dbReference type="UniProtKB" id="Q1LZ08"/>
    </source>
</evidence>
<evidence type="ECO:0000250" key="3">
    <source>
        <dbReference type="UniProtKB" id="Q8TAF3"/>
    </source>
</evidence>
<evidence type="ECO:0000255" key="4"/>
<evidence type="ECO:0000256" key="5">
    <source>
        <dbReference type="SAM" id="MobiDB-lite"/>
    </source>
</evidence>
<evidence type="ECO:0000305" key="6"/>
<evidence type="ECO:0000312" key="7">
    <source>
        <dbReference type="Proteomes" id="UP000002282"/>
    </source>
</evidence>
<keyword id="KW-0677">Repeat</keyword>
<keyword id="KW-0833">Ubl conjugation pathway</keyword>
<keyword id="KW-0853">WD repeat</keyword>
<feature type="chain" id="PRO_0000378988" description="WD repeat-containing protein 48 homolog">
    <location>
        <begin position="1"/>
        <end position="680"/>
    </location>
</feature>
<feature type="repeat" description="WD 1" evidence="4">
    <location>
        <begin position="26"/>
        <end position="65"/>
    </location>
</feature>
<feature type="repeat" description="WD 2" evidence="4">
    <location>
        <begin position="71"/>
        <end position="110"/>
    </location>
</feature>
<feature type="repeat" description="WD 3" evidence="4">
    <location>
        <begin position="113"/>
        <end position="152"/>
    </location>
</feature>
<feature type="repeat" description="WD 4" evidence="4">
    <location>
        <begin position="164"/>
        <end position="203"/>
    </location>
</feature>
<feature type="repeat" description="WD 5" evidence="4">
    <location>
        <begin position="206"/>
        <end position="245"/>
    </location>
</feature>
<feature type="repeat" description="WD 6" evidence="4">
    <location>
        <begin position="248"/>
        <end position="287"/>
    </location>
</feature>
<feature type="repeat" description="WD 7" evidence="4">
    <location>
        <begin position="290"/>
        <end position="329"/>
    </location>
</feature>
<feature type="repeat" description="WD 8" evidence="4">
    <location>
        <begin position="350"/>
        <end position="389"/>
    </location>
</feature>
<feature type="region of interest" description="Disordered" evidence="5">
    <location>
        <begin position="592"/>
        <end position="616"/>
    </location>
</feature>